<comment type="function">
    <text evidence="1">Plays a critical role in the incorporation of lipoproteins in the outer membrane after they are released by the LolA protein.</text>
</comment>
<comment type="subunit">
    <text evidence="1">Monomer.</text>
</comment>
<comment type="subcellular location">
    <subcellularLocation>
        <location evidence="1">Cell outer membrane</location>
        <topology evidence="1">Lipid-anchor</topology>
    </subcellularLocation>
</comment>
<comment type="similarity">
    <text evidence="1">Belongs to the LolB family.</text>
</comment>
<evidence type="ECO:0000255" key="1">
    <source>
        <dbReference type="HAMAP-Rule" id="MF_00233"/>
    </source>
</evidence>
<dbReference type="EMBL" id="CP000238">
    <property type="protein sequence ID" value="ABF14071.1"/>
    <property type="molecule type" value="Genomic_DNA"/>
</dbReference>
<dbReference type="RefSeq" id="WP_011520473.1">
    <property type="nucleotide sequence ID" value="NC_007984.1"/>
</dbReference>
<dbReference type="SMR" id="Q1LTH4"/>
<dbReference type="STRING" id="374463.BCI_0291"/>
<dbReference type="KEGG" id="bci:BCI_0291"/>
<dbReference type="HOGENOM" id="CLU_092816_1_1_6"/>
<dbReference type="OrthoDB" id="9797618at2"/>
<dbReference type="Proteomes" id="UP000002427">
    <property type="component" value="Chromosome"/>
</dbReference>
<dbReference type="GO" id="GO:0009279">
    <property type="term" value="C:cell outer membrane"/>
    <property type="evidence" value="ECO:0007669"/>
    <property type="project" value="UniProtKB-SubCell"/>
</dbReference>
<dbReference type="GO" id="GO:0044874">
    <property type="term" value="P:lipoprotein localization to outer membrane"/>
    <property type="evidence" value="ECO:0007669"/>
    <property type="project" value="UniProtKB-UniRule"/>
</dbReference>
<dbReference type="GO" id="GO:0015031">
    <property type="term" value="P:protein transport"/>
    <property type="evidence" value="ECO:0007669"/>
    <property type="project" value="UniProtKB-KW"/>
</dbReference>
<dbReference type="CDD" id="cd16326">
    <property type="entry name" value="LolB"/>
    <property type="match status" value="1"/>
</dbReference>
<dbReference type="Gene3D" id="2.50.20.10">
    <property type="entry name" value="Lipoprotein localisation LolA/LolB/LppX"/>
    <property type="match status" value="1"/>
</dbReference>
<dbReference type="HAMAP" id="MF_00233">
    <property type="entry name" value="LolB"/>
    <property type="match status" value="1"/>
</dbReference>
<dbReference type="InterPro" id="IPR029046">
    <property type="entry name" value="LolA/LolB/LppX"/>
</dbReference>
<dbReference type="InterPro" id="IPR004565">
    <property type="entry name" value="OM_lipoprot_LolB"/>
</dbReference>
<dbReference type="NCBIfam" id="TIGR00548">
    <property type="entry name" value="lolB"/>
    <property type="match status" value="1"/>
</dbReference>
<dbReference type="Pfam" id="PF03550">
    <property type="entry name" value="LolB"/>
    <property type="match status" value="1"/>
</dbReference>
<dbReference type="SUPFAM" id="SSF89392">
    <property type="entry name" value="Prokaryotic lipoproteins and lipoprotein localization factors"/>
    <property type="match status" value="1"/>
</dbReference>
<dbReference type="PROSITE" id="PS51257">
    <property type="entry name" value="PROKAR_LIPOPROTEIN"/>
    <property type="match status" value="1"/>
</dbReference>
<protein>
    <recommendedName>
        <fullName evidence="1">Outer-membrane lipoprotein LolB</fullName>
    </recommendedName>
</protein>
<feature type="signal peptide" evidence="1">
    <location>
        <begin position="1"/>
        <end position="21"/>
    </location>
</feature>
<feature type="chain" id="PRO_0000336598" description="Outer-membrane lipoprotein LolB">
    <location>
        <begin position="22"/>
        <end position="215"/>
    </location>
</feature>
<feature type="lipid moiety-binding region" description="N-palmitoyl cysteine" evidence="1">
    <location>
        <position position="22"/>
    </location>
</feature>
<feature type="lipid moiety-binding region" description="S-diacylglycerol cysteine" evidence="1">
    <location>
        <position position="22"/>
    </location>
</feature>
<keyword id="KW-0998">Cell outer membrane</keyword>
<keyword id="KW-0143">Chaperone</keyword>
<keyword id="KW-0449">Lipoprotein</keyword>
<keyword id="KW-0472">Membrane</keyword>
<keyword id="KW-0564">Palmitate</keyword>
<keyword id="KW-0653">Protein transport</keyword>
<keyword id="KW-1185">Reference proteome</keyword>
<keyword id="KW-0732">Signal</keyword>
<keyword id="KW-0813">Transport</keyword>
<sequence>MLIPKKYYLLIILLSNCLLASCSINTPNPSNIALMQLTRENNYNLKWHSHKYLVKKINHYRTNGLFAYLSRNKITYANFNWQQISTNHYRLVLLNMIGNAKIDLHILPGLVKLIDFQGQSYLNEEALARIKILLGLDLPLNELHEWILGLPGQATNLTFNQQGYLHKISYHYHGQHWNITYKSYHEDKIPALPDCIEIRQDNNLIKLKMNEWSMS</sequence>
<gene>
    <name evidence="1" type="primary">lolB</name>
    <name type="ordered locus">BCI_0291</name>
</gene>
<accession>Q1LTH4</accession>
<proteinExistence type="inferred from homology"/>
<organism>
    <name type="scientific">Baumannia cicadellinicola subsp. Homalodisca coagulata</name>
    <dbReference type="NCBI Taxonomy" id="374463"/>
    <lineage>
        <taxon>Bacteria</taxon>
        <taxon>Pseudomonadati</taxon>
        <taxon>Pseudomonadota</taxon>
        <taxon>Gammaproteobacteria</taxon>
        <taxon>Candidatus Palibaumannia</taxon>
    </lineage>
</organism>
<name>LOLB_BAUCH</name>
<reference key="1">
    <citation type="journal article" date="2006" name="PLoS Biol.">
        <title>Metabolic complementarity and genomics of the dual bacterial symbiosis of sharpshooters.</title>
        <authorList>
            <person name="Wu D."/>
            <person name="Daugherty S.C."/>
            <person name="Van Aken S.E."/>
            <person name="Pai G.H."/>
            <person name="Watkins K.L."/>
            <person name="Khouri H."/>
            <person name="Tallon L.J."/>
            <person name="Zaborsky J.M."/>
            <person name="Dunbar H.E."/>
            <person name="Tran P.L."/>
            <person name="Moran N.A."/>
            <person name="Eisen J.A."/>
        </authorList>
    </citation>
    <scope>NUCLEOTIDE SEQUENCE [LARGE SCALE GENOMIC DNA]</scope>
</reference>